<name>MKAR_YEAS1</name>
<feature type="chain" id="PRO_0000357326" description="Very-long-chain 3-oxoacyl-CoA reductase">
    <location>
        <begin position="1"/>
        <end position="347"/>
    </location>
</feature>
<feature type="transmembrane region" description="Helical" evidence="4">
    <location>
        <begin position="20"/>
        <end position="40"/>
    </location>
</feature>
<feature type="active site" description="Proton donor" evidence="2">
    <location>
        <position position="223"/>
    </location>
</feature>
<feature type="active site" description="Lowers pKa of active site Tyr" evidence="2">
    <location>
        <position position="227"/>
    </location>
</feature>
<feature type="binding site" evidence="1">
    <location>
        <position position="66"/>
    </location>
    <ligand>
        <name>NADP(+)</name>
        <dbReference type="ChEBI" id="CHEBI:58349"/>
    </ligand>
</feature>
<feature type="binding site" evidence="1">
    <location>
        <position position="120"/>
    </location>
    <ligand>
        <name>NADP(+)</name>
        <dbReference type="ChEBI" id="CHEBI:58349"/>
    </ligand>
</feature>
<feature type="binding site" evidence="2">
    <location>
        <position position="147"/>
    </location>
    <ligand>
        <name>NADP(+)</name>
        <dbReference type="ChEBI" id="CHEBI:58349"/>
    </ligand>
</feature>
<feature type="binding site" evidence="2">
    <location>
        <position position="223"/>
    </location>
    <ligand>
        <name>NADP(+)</name>
        <dbReference type="ChEBI" id="CHEBI:58349"/>
    </ligand>
</feature>
<feature type="binding site" evidence="2">
    <location>
        <position position="227"/>
    </location>
    <ligand>
        <name>NADP(+)</name>
        <dbReference type="ChEBI" id="CHEBI:58349"/>
    </ligand>
</feature>
<feature type="binding site" evidence="2">
    <location>
        <position position="256"/>
    </location>
    <ligand>
        <name>NADP(+)</name>
        <dbReference type="ChEBI" id="CHEBI:58349"/>
    </ligand>
</feature>
<feature type="binding site" evidence="1">
    <location>
        <position position="258"/>
    </location>
    <ligand>
        <name>NADP(+)</name>
        <dbReference type="ChEBI" id="CHEBI:58349"/>
    </ligand>
</feature>
<protein>
    <recommendedName>
        <fullName evidence="4">Very-long-chain 3-oxoacyl-CoA reductase</fullName>
        <ecNumber evidence="4">1.1.1.330</ecNumber>
    </recommendedName>
    <alternativeName>
        <fullName evidence="4">3-ketoacyl-CoA reductase</fullName>
        <shortName evidence="4">3-ketoreductase</shortName>
        <shortName evidence="4">KAR</shortName>
    </alternativeName>
    <alternativeName>
        <fullName evidence="4">Microsomal beta-keto-reductase</fullName>
    </alternativeName>
</protein>
<gene>
    <name type="ORF">SCRG_02811</name>
</gene>
<comment type="function">
    <text evidence="4">Component of the microsomal membrane bound fatty acid elongation system, which produces the 26-carbon very long-chain fatty acids (VLCFA) from palmitate. Catalyzes the reduction of the 3-ketoacyl-CoA intermediate that is formed in each cycle of fatty acid elongation. VLCFAs serve as precursors for ceramide and sphingolipids.</text>
</comment>
<comment type="catalytic activity">
    <reaction evidence="4">
        <text>a very-long-chain (3R)-3-hydroxyacyl-CoA + NADP(+) = a very-long-chain 3-oxoacyl-CoA + NADPH + H(+)</text>
        <dbReference type="Rhea" id="RHEA:48680"/>
        <dbReference type="ChEBI" id="CHEBI:15378"/>
        <dbReference type="ChEBI" id="CHEBI:57783"/>
        <dbReference type="ChEBI" id="CHEBI:58349"/>
        <dbReference type="ChEBI" id="CHEBI:85440"/>
        <dbReference type="ChEBI" id="CHEBI:90725"/>
        <dbReference type="EC" id="1.1.1.330"/>
    </reaction>
</comment>
<comment type="pathway">
    <text evidence="3">Lipid metabolism; fatty acid biosynthesis.</text>
</comment>
<comment type="subunit">
    <text evidence="4">Interacts with the fatty acid elongation system components ELO3 and TSC13.</text>
</comment>
<comment type="subcellular location">
    <subcellularLocation>
        <location evidence="4">Endoplasmic reticulum membrane</location>
        <topology evidence="4">Single-pass membrane protein</topology>
    </subcellularLocation>
</comment>
<comment type="similarity">
    <text evidence="4">Belongs to the short-chain dehydrogenases/reductases (SDR) family.</text>
</comment>
<dbReference type="EC" id="1.1.1.330" evidence="4"/>
<dbReference type="EMBL" id="CH408048">
    <property type="protein sequence ID" value="EDV11953.1"/>
    <property type="molecule type" value="Genomic_DNA"/>
</dbReference>
<dbReference type="SMR" id="B3LN00"/>
<dbReference type="HOGENOM" id="CLU_010194_38_0_1"/>
<dbReference type="OrthoDB" id="30562at4893"/>
<dbReference type="UniPathway" id="UPA00094"/>
<dbReference type="Proteomes" id="UP000008335">
    <property type="component" value="Unassembled WGS sequence"/>
</dbReference>
<dbReference type="GO" id="GO:0005789">
    <property type="term" value="C:endoplasmic reticulum membrane"/>
    <property type="evidence" value="ECO:0007669"/>
    <property type="project" value="UniProtKB-SubCell"/>
</dbReference>
<dbReference type="GO" id="GO:0045703">
    <property type="term" value="F:ketoreductase activity"/>
    <property type="evidence" value="ECO:0007669"/>
    <property type="project" value="UniProtKB-UniRule"/>
</dbReference>
<dbReference type="GO" id="GO:0141040">
    <property type="term" value="F:very-long-chain 3-oxoacyl-CoA reductase activity"/>
    <property type="evidence" value="ECO:0007669"/>
    <property type="project" value="UniProtKB-EC"/>
</dbReference>
<dbReference type="GO" id="GO:0030497">
    <property type="term" value="P:fatty acid elongation"/>
    <property type="evidence" value="ECO:0007669"/>
    <property type="project" value="UniProtKB-UniRule"/>
</dbReference>
<dbReference type="CDD" id="cd05356">
    <property type="entry name" value="17beta-HSD1_like_SDR_c"/>
    <property type="match status" value="1"/>
</dbReference>
<dbReference type="FunFam" id="3.40.50.720:FF:000317">
    <property type="entry name" value="Very-long-chain 3-oxoacyl-CoA reductase"/>
    <property type="match status" value="1"/>
</dbReference>
<dbReference type="Gene3D" id="3.40.50.720">
    <property type="entry name" value="NAD(P)-binding Rossmann-like Domain"/>
    <property type="match status" value="1"/>
</dbReference>
<dbReference type="HAMAP" id="MF_03107">
    <property type="entry name" value="3_ketoreductase"/>
    <property type="match status" value="1"/>
</dbReference>
<dbReference type="InterPro" id="IPR027533">
    <property type="entry name" value="3_ketoreductase_fungal"/>
</dbReference>
<dbReference type="InterPro" id="IPR036291">
    <property type="entry name" value="NAD(P)-bd_dom_sf"/>
</dbReference>
<dbReference type="InterPro" id="IPR020904">
    <property type="entry name" value="Sc_DH/Rdtase_CS"/>
</dbReference>
<dbReference type="InterPro" id="IPR002347">
    <property type="entry name" value="SDR_fam"/>
</dbReference>
<dbReference type="PANTHER" id="PTHR43086:SF2">
    <property type="entry name" value="HYDROXYSTEROID DEHYDROGENASE-LIKE PROTEIN 1"/>
    <property type="match status" value="1"/>
</dbReference>
<dbReference type="PANTHER" id="PTHR43086">
    <property type="entry name" value="VERY-LONG-CHAIN 3-OXOOACYL-COA REDUCTASE"/>
    <property type="match status" value="1"/>
</dbReference>
<dbReference type="Pfam" id="PF00106">
    <property type="entry name" value="adh_short"/>
    <property type="match status" value="1"/>
</dbReference>
<dbReference type="PIRSF" id="PIRSF000126">
    <property type="entry name" value="11-beta-HSD1"/>
    <property type="match status" value="1"/>
</dbReference>
<dbReference type="PRINTS" id="PR00081">
    <property type="entry name" value="GDHRDH"/>
</dbReference>
<dbReference type="SUPFAM" id="SSF51735">
    <property type="entry name" value="NAD(P)-binding Rossmann-fold domains"/>
    <property type="match status" value="1"/>
</dbReference>
<dbReference type="PROSITE" id="PS00061">
    <property type="entry name" value="ADH_SHORT"/>
    <property type="match status" value="1"/>
</dbReference>
<accession>B3LN00</accession>
<evidence type="ECO:0000250" key="1">
    <source>
        <dbReference type="UniProtKB" id="L0E2Z4"/>
    </source>
</evidence>
<evidence type="ECO:0000250" key="2">
    <source>
        <dbReference type="UniProtKB" id="O93868"/>
    </source>
</evidence>
<evidence type="ECO:0000250" key="3">
    <source>
        <dbReference type="UniProtKB" id="P38286"/>
    </source>
</evidence>
<evidence type="ECO:0000255" key="4">
    <source>
        <dbReference type="HAMAP-Rule" id="MF_03107"/>
    </source>
</evidence>
<sequence>MTFMQQLQEAGERFRCINGLLWVVFGLGVLKCTTLSLRFLALIFDLFLLPAVNFDKYGAKSGKYCVITGASDGIGKEFARQMAKRGFNLVLISRTQSKLEALQKELEDQHHVVVKILAIDIAEDKESNYESIKELCAQLPITVLVNNVGQSHSIPVPFLETEEKELRDIITINNTATLLITQIIAPKIVETVKAENKKSGTRGLILTMGSFGGLIPTPLLATYSGSKSFLQSWSNSLAGELSKDAIDVELIISYLVTSSMSKIRRSSLMIPNPQQFVKSTLRSVGRRCGSQERYATMTPYWAHAVYQFVITETFGVYSKIVNSINYSFHKSIRIRALKKAARQVKKE</sequence>
<reference key="1">
    <citation type="submission" date="2005-03" db="EMBL/GenBank/DDBJ databases">
        <title>Annotation of the Saccharomyces cerevisiae RM11-1a genome.</title>
        <authorList>
            <consortium name="The Broad Institute Genome Sequencing Platform"/>
            <person name="Birren B.W."/>
            <person name="Lander E.S."/>
            <person name="Galagan J.E."/>
            <person name="Nusbaum C."/>
            <person name="Devon K."/>
            <person name="Cuomo C."/>
            <person name="Jaffe D.B."/>
            <person name="Butler J."/>
            <person name="Alvarez P."/>
            <person name="Gnerre S."/>
            <person name="Grabherr M."/>
            <person name="Kleber M."/>
            <person name="Mauceli E.W."/>
            <person name="Brockman W."/>
            <person name="MacCallum I.A."/>
            <person name="Rounsley S."/>
            <person name="Young S.K."/>
            <person name="LaButti K."/>
            <person name="Pushparaj V."/>
            <person name="DeCaprio D."/>
            <person name="Crawford M."/>
            <person name="Koehrsen M."/>
            <person name="Engels R."/>
            <person name="Montgomery P."/>
            <person name="Pearson M."/>
            <person name="Howarth C."/>
            <person name="Larson L."/>
            <person name="Luoma S."/>
            <person name="White J."/>
            <person name="O'Leary S."/>
            <person name="Kodira C.D."/>
            <person name="Zeng Q."/>
            <person name="Yandava C."/>
            <person name="Alvarado L."/>
            <person name="Pratt S."/>
            <person name="Kruglyak L."/>
        </authorList>
    </citation>
    <scope>NUCLEOTIDE SEQUENCE [LARGE SCALE GENOMIC DNA]</scope>
    <source>
        <strain>RM11-1a</strain>
    </source>
</reference>
<proteinExistence type="inferred from homology"/>
<organism>
    <name type="scientific">Saccharomyces cerevisiae (strain RM11-1a)</name>
    <name type="common">Baker's yeast</name>
    <dbReference type="NCBI Taxonomy" id="285006"/>
    <lineage>
        <taxon>Eukaryota</taxon>
        <taxon>Fungi</taxon>
        <taxon>Dikarya</taxon>
        <taxon>Ascomycota</taxon>
        <taxon>Saccharomycotina</taxon>
        <taxon>Saccharomycetes</taxon>
        <taxon>Saccharomycetales</taxon>
        <taxon>Saccharomycetaceae</taxon>
        <taxon>Saccharomyces</taxon>
    </lineage>
</organism>
<keyword id="KW-0256">Endoplasmic reticulum</keyword>
<keyword id="KW-0275">Fatty acid biosynthesis</keyword>
<keyword id="KW-0276">Fatty acid metabolism</keyword>
<keyword id="KW-0444">Lipid biosynthesis</keyword>
<keyword id="KW-0443">Lipid metabolism</keyword>
<keyword id="KW-0472">Membrane</keyword>
<keyword id="KW-0521">NADP</keyword>
<keyword id="KW-0560">Oxidoreductase</keyword>
<keyword id="KW-0812">Transmembrane</keyword>
<keyword id="KW-1133">Transmembrane helix</keyword>